<feature type="chain" id="PRO_0000092609" description="ATP-dependent lipid A-core flippase">
    <location>
        <begin position="1"/>
        <end position="589"/>
    </location>
</feature>
<feature type="transmembrane region" description="Helical" evidence="1">
    <location>
        <begin position="29"/>
        <end position="49"/>
    </location>
</feature>
<feature type="transmembrane region" description="Helical" evidence="1">
    <location>
        <begin position="68"/>
        <end position="88"/>
    </location>
</feature>
<feature type="transmembrane region" description="Helical" evidence="1">
    <location>
        <begin position="157"/>
        <end position="177"/>
    </location>
</feature>
<feature type="transmembrane region" description="Helical" evidence="1">
    <location>
        <begin position="254"/>
        <end position="274"/>
    </location>
</feature>
<feature type="transmembrane region" description="Helical" evidence="1">
    <location>
        <begin position="283"/>
        <end position="303"/>
    </location>
</feature>
<feature type="domain" description="ABC transmembrane type-1" evidence="1">
    <location>
        <begin position="32"/>
        <end position="314"/>
    </location>
</feature>
<feature type="domain" description="ABC transporter" evidence="1">
    <location>
        <begin position="346"/>
        <end position="582"/>
    </location>
</feature>
<feature type="binding site" evidence="1">
    <location>
        <begin position="380"/>
        <end position="387"/>
    </location>
    <ligand>
        <name>ATP</name>
        <dbReference type="ChEBI" id="CHEBI:30616"/>
    </ligand>
</feature>
<proteinExistence type="inferred from homology"/>
<reference key="1">
    <citation type="journal article" date="2003" name="J. Bacteriol.">
        <title>Comparative analyses of the complete genome sequences of Pierce's disease and citrus variegated chlorosis strains of Xylella fastidiosa.</title>
        <authorList>
            <person name="Van Sluys M.A."/>
            <person name="de Oliveira M.C."/>
            <person name="Monteiro-Vitorello C.B."/>
            <person name="Miyaki C.Y."/>
            <person name="Furlan L.R."/>
            <person name="Camargo L.E.A."/>
            <person name="da Silva A.C.R."/>
            <person name="Moon D.H."/>
            <person name="Takita M.A."/>
            <person name="Lemos E.G.M."/>
            <person name="Machado M.A."/>
            <person name="Ferro M.I.T."/>
            <person name="da Silva F.R."/>
            <person name="Goldman M.H.S."/>
            <person name="Goldman G.H."/>
            <person name="Lemos M.V.F."/>
            <person name="El-Dorry H."/>
            <person name="Tsai S.M."/>
            <person name="Carrer H."/>
            <person name="Carraro D.M."/>
            <person name="de Oliveira R.C."/>
            <person name="Nunes L.R."/>
            <person name="Siqueira W.J."/>
            <person name="Coutinho L.L."/>
            <person name="Kimura E.T."/>
            <person name="Ferro E.S."/>
            <person name="Harakava R."/>
            <person name="Kuramae E.E."/>
            <person name="Marino C.L."/>
            <person name="Giglioti E."/>
            <person name="Abreu I.L."/>
            <person name="Alves L.M.C."/>
            <person name="do Amaral A.M."/>
            <person name="Baia G.S."/>
            <person name="Blanco S.R."/>
            <person name="Brito M.S."/>
            <person name="Cannavan F.S."/>
            <person name="Celestino A.V."/>
            <person name="da Cunha A.F."/>
            <person name="Fenille R.C."/>
            <person name="Ferro J.A."/>
            <person name="Formighieri E.F."/>
            <person name="Kishi L.T."/>
            <person name="Leoni S.G."/>
            <person name="Oliveira A.R."/>
            <person name="Rosa V.E. Jr."/>
            <person name="Sassaki F.T."/>
            <person name="Sena J.A.D."/>
            <person name="de Souza A.A."/>
            <person name="Truffi D."/>
            <person name="Tsukumo F."/>
            <person name="Yanai G.M."/>
            <person name="Zaros L.G."/>
            <person name="Civerolo E.L."/>
            <person name="Simpson A.J.G."/>
            <person name="Almeida N.F. Jr."/>
            <person name="Setubal J.C."/>
            <person name="Kitajima J.P."/>
        </authorList>
    </citation>
    <scope>NUCLEOTIDE SEQUENCE [LARGE SCALE GENOMIC DNA]</scope>
    <source>
        <strain>Temecula1 / ATCC 700964</strain>
    </source>
</reference>
<organism>
    <name type="scientific">Xylella fastidiosa (strain Temecula1 / ATCC 700964)</name>
    <dbReference type="NCBI Taxonomy" id="183190"/>
    <lineage>
        <taxon>Bacteria</taxon>
        <taxon>Pseudomonadati</taxon>
        <taxon>Pseudomonadota</taxon>
        <taxon>Gammaproteobacteria</taxon>
        <taxon>Lysobacterales</taxon>
        <taxon>Lysobacteraceae</taxon>
        <taxon>Xylella</taxon>
    </lineage>
</organism>
<protein>
    <recommendedName>
        <fullName evidence="1">ATP-dependent lipid A-core flippase</fullName>
        <ecNumber evidence="1">7.5.2.6</ecNumber>
    </recommendedName>
    <alternativeName>
        <fullName evidence="1">Lipid A export ATP-binding/permease protein MsbA</fullName>
    </alternativeName>
</protein>
<keyword id="KW-0067">ATP-binding</keyword>
<keyword id="KW-0997">Cell inner membrane</keyword>
<keyword id="KW-1003">Cell membrane</keyword>
<keyword id="KW-0445">Lipid transport</keyword>
<keyword id="KW-0472">Membrane</keyword>
<keyword id="KW-0547">Nucleotide-binding</keyword>
<keyword id="KW-1185">Reference proteome</keyword>
<keyword id="KW-1278">Translocase</keyword>
<keyword id="KW-0812">Transmembrane</keyword>
<keyword id="KW-1133">Transmembrane helix</keyword>
<keyword id="KW-0813">Transport</keyword>
<name>MSBA_XYLFT</name>
<accession>Q87EF0</accession>
<sequence length="589" mass="64856">MNVLSGAMRYATPWRTYRRLLSYAREYRWLLVVAACGALLEAVAGSTFLALMKPITNETFIERNREVALWLPLGIVGLFLLRGIAGYITDMAMGRAARSIARDFRVCVLTKYFRLPGSRFDGEPVASMLVRLGSDSEQVAHAVIDAMKVMVQQTLQVIGALVVMLWYSWTVTLAILLVAPLLAWVMQRVAKRYRRISHHIQESNAQLMQAADQALSNYQDVKVYAAQESELERYARLANINLGLAVKVESTRSISSAAVQLLGAVGLAMLLLIAGHEALAGRLSPGDFVSLMTSMIAVIPALKQLTNVQNMLQSGIASAQRLFSVLDSPDELDTGRRPLGRARGLIEFRGITARYPGRSAPVLDSVSFVAAPGTVTAIVGRSGSGKSSLIKLIPRFYEPESGQILLDGHPLQDYLLADLRRQIALVGQQVMLFDGSIADNIAYGEMRQVVSEEIERVVVDANAQDFVNQLPEGLQFQVGVKGGRLSGGQRQRLAIARAMLKDAPILILDEATAALDNESERLVQDALQRLMPERTTLVIAHRLSTIKHADQVLVMDQGRIIESGTHVDLLARDGLYAYLYSMQFRERPT</sequence>
<dbReference type="EC" id="7.5.2.6" evidence="1"/>
<dbReference type="EMBL" id="AE009442">
    <property type="protein sequence ID" value="AAO28241.1"/>
    <property type="molecule type" value="Genomic_DNA"/>
</dbReference>
<dbReference type="SMR" id="Q87EF0"/>
<dbReference type="KEGG" id="xft:PD_0361"/>
<dbReference type="HOGENOM" id="CLU_000604_84_3_6"/>
<dbReference type="Proteomes" id="UP000002516">
    <property type="component" value="Chromosome"/>
</dbReference>
<dbReference type="GO" id="GO:0005886">
    <property type="term" value="C:plasma membrane"/>
    <property type="evidence" value="ECO:0007669"/>
    <property type="project" value="UniProtKB-SubCell"/>
</dbReference>
<dbReference type="GO" id="GO:0015421">
    <property type="term" value="F:ABC-type oligopeptide transporter activity"/>
    <property type="evidence" value="ECO:0007669"/>
    <property type="project" value="TreeGrafter"/>
</dbReference>
<dbReference type="GO" id="GO:0005524">
    <property type="term" value="F:ATP binding"/>
    <property type="evidence" value="ECO:0007669"/>
    <property type="project" value="UniProtKB-KW"/>
</dbReference>
<dbReference type="GO" id="GO:0016887">
    <property type="term" value="F:ATP hydrolysis activity"/>
    <property type="evidence" value="ECO:0007669"/>
    <property type="project" value="InterPro"/>
</dbReference>
<dbReference type="GO" id="GO:0034040">
    <property type="term" value="F:ATPase-coupled lipid transmembrane transporter activity"/>
    <property type="evidence" value="ECO:0007669"/>
    <property type="project" value="InterPro"/>
</dbReference>
<dbReference type="CDD" id="cd18552">
    <property type="entry name" value="ABC_6TM_MsbA_like"/>
    <property type="match status" value="1"/>
</dbReference>
<dbReference type="FunFam" id="3.40.50.300:FF:000140">
    <property type="entry name" value="Lipid A export ATP-binding/permease protein MsbA"/>
    <property type="match status" value="1"/>
</dbReference>
<dbReference type="Gene3D" id="1.20.1560.10">
    <property type="entry name" value="ABC transporter type 1, transmembrane domain"/>
    <property type="match status" value="1"/>
</dbReference>
<dbReference type="Gene3D" id="3.40.50.300">
    <property type="entry name" value="P-loop containing nucleotide triphosphate hydrolases"/>
    <property type="match status" value="1"/>
</dbReference>
<dbReference type="InterPro" id="IPR003593">
    <property type="entry name" value="AAA+_ATPase"/>
</dbReference>
<dbReference type="InterPro" id="IPR011527">
    <property type="entry name" value="ABC1_TM_dom"/>
</dbReference>
<dbReference type="InterPro" id="IPR036640">
    <property type="entry name" value="ABC1_TM_sf"/>
</dbReference>
<dbReference type="InterPro" id="IPR003439">
    <property type="entry name" value="ABC_transporter-like_ATP-bd"/>
</dbReference>
<dbReference type="InterPro" id="IPR017871">
    <property type="entry name" value="ABC_transporter-like_CS"/>
</dbReference>
<dbReference type="InterPro" id="IPR011917">
    <property type="entry name" value="ABC_transpr_lipidA"/>
</dbReference>
<dbReference type="InterPro" id="IPR027417">
    <property type="entry name" value="P-loop_NTPase"/>
</dbReference>
<dbReference type="InterPro" id="IPR039421">
    <property type="entry name" value="Type_1_exporter"/>
</dbReference>
<dbReference type="NCBIfam" id="TIGR02203">
    <property type="entry name" value="MsbA_lipidA"/>
    <property type="match status" value="1"/>
</dbReference>
<dbReference type="PANTHER" id="PTHR43394:SF1">
    <property type="entry name" value="ATP-BINDING CASSETTE SUB-FAMILY B MEMBER 10, MITOCHONDRIAL"/>
    <property type="match status" value="1"/>
</dbReference>
<dbReference type="PANTHER" id="PTHR43394">
    <property type="entry name" value="ATP-DEPENDENT PERMEASE MDL1, MITOCHONDRIAL"/>
    <property type="match status" value="1"/>
</dbReference>
<dbReference type="Pfam" id="PF00664">
    <property type="entry name" value="ABC_membrane"/>
    <property type="match status" value="1"/>
</dbReference>
<dbReference type="Pfam" id="PF00005">
    <property type="entry name" value="ABC_tran"/>
    <property type="match status" value="1"/>
</dbReference>
<dbReference type="SMART" id="SM00382">
    <property type="entry name" value="AAA"/>
    <property type="match status" value="1"/>
</dbReference>
<dbReference type="SUPFAM" id="SSF90123">
    <property type="entry name" value="ABC transporter transmembrane region"/>
    <property type="match status" value="1"/>
</dbReference>
<dbReference type="SUPFAM" id="SSF52540">
    <property type="entry name" value="P-loop containing nucleoside triphosphate hydrolases"/>
    <property type="match status" value="1"/>
</dbReference>
<dbReference type="PROSITE" id="PS50929">
    <property type="entry name" value="ABC_TM1F"/>
    <property type="match status" value="1"/>
</dbReference>
<dbReference type="PROSITE" id="PS00211">
    <property type="entry name" value="ABC_TRANSPORTER_1"/>
    <property type="match status" value="1"/>
</dbReference>
<dbReference type="PROSITE" id="PS50893">
    <property type="entry name" value="ABC_TRANSPORTER_2"/>
    <property type="match status" value="1"/>
</dbReference>
<dbReference type="PROSITE" id="PS51239">
    <property type="entry name" value="MSBA"/>
    <property type="match status" value="1"/>
</dbReference>
<evidence type="ECO:0000255" key="1">
    <source>
        <dbReference type="HAMAP-Rule" id="MF_01703"/>
    </source>
</evidence>
<comment type="function">
    <text evidence="1">Involved in lipopolysaccharide (LPS) biosynthesis. Translocates lipid A-core from the inner to the outer leaflet of the inner membrane. Transmembrane domains (TMD) form a pore in the inner membrane and the ATP-binding domain (NBD) is responsible for energy generation.</text>
</comment>
<comment type="catalytic activity">
    <reaction evidence="1">
        <text>ATP + H2O + lipid A-core oligosaccharideSide 1 = ADP + phosphate + lipid A-core oligosaccharideSide 2.</text>
        <dbReference type="EC" id="7.5.2.6"/>
    </reaction>
</comment>
<comment type="subunit">
    <text evidence="1">Homodimer.</text>
</comment>
<comment type="subcellular location">
    <subcellularLocation>
        <location evidence="1">Cell inner membrane</location>
        <topology evidence="1">Multi-pass membrane protein</topology>
    </subcellularLocation>
</comment>
<comment type="domain">
    <text evidence="1">In MsbA the ATP-binding domain (NBD) and the transmembrane domain (TMD) are fused.</text>
</comment>
<comment type="similarity">
    <text evidence="1">Belongs to the ABC transporter superfamily. Lipid exporter (TC 3.A.1.106) family.</text>
</comment>
<gene>
    <name evidence="1" type="primary">msbA</name>
    <name type="ordered locus">PD_0361</name>
</gene>